<dbReference type="EC" id="3.1.3.11" evidence="1"/>
<dbReference type="EMBL" id="CP000453">
    <property type="protein sequence ID" value="ABI57976.1"/>
    <property type="molecule type" value="Genomic_DNA"/>
</dbReference>
<dbReference type="RefSeq" id="WP_011630369.1">
    <property type="nucleotide sequence ID" value="NC_008340.1"/>
</dbReference>
<dbReference type="SMR" id="Q0A5B1"/>
<dbReference type="KEGG" id="aeh:Mlg_2636"/>
<dbReference type="eggNOG" id="COG0158">
    <property type="taxonomic scope" value="Bacteria"/>
</dbReference>
<dbReference type="HOGENOM" id="CLU_039977_2_2_6"/>
<dbReference type="OrthoDB" id="9806756at2"/>
<dbReference type="UniPathway" id="UPA00138"/>
<dbReference type="Proteomes" id="UP000001962">
    <property type="component" value="Chromosome"/>
</dbReference>
<dbReference type="GO" id="GO:0005829">
    <property type="term" value="C:cytosol"/>
    <property type="evidence" value="ECO:0007669"/>
    <property type="project" value="TreeGrafter"/>
</dbReference>
<dbReference type="GO" id="GO:0042132">
    <property type="term" value="F:fructose 1,6-bisphosphate 1-phosphatase activity"/>
    <property type="evidence" value="ECO:0007669"/>
    <property type="project" value="UniProtKB-UniRule"/>
</dbReference>
<dbReference type="GO" id="GO:0000287">
    <property type="term" value="F:magnesium ion binding"/>
    <property type="evidence" value="ECO:0007669"/>
    <property type="project" value="UniProtKB-UniRule"/>
</dbReference>
<dbReference type="GO" id="GO:0030388">
    <property type="term" value="P:fructose 1,6-bisphosphate metabolic process"/>
    <property type="evidence" value="ECO:0007669"/>
    <property type="project" value="TreeGrafter"/>
</dbReference>
<dbReference type="GO" id="GO:0006002">
    <property type="term" value="P:fructose 6-phosphate metabolic process"/>
    <property type="evidence" value="ECO:0007669"/>
    <property type="project" value="TreeGrafter"/>
</dbReference>
<dbReference type="GO" id="GO:0006000">
    <property type="term" value="P:fructose metabolic process"/>
    <property type="evidence" value="ECO:0007669"/>
    <property type="project" value="TreeGrafter"/>
</dbReference>
<dbReference type="GO" id="GO:0006094">
    <property type="term" value="P:gluconeogenesis"/>
    <property type="evidence" value="ECO:0007669"/>
    <property type="project" value="UniProtKB-UniRule"/>
</dbReference>
<dbReference type="GO" id="GO:0005986">
    <property type="term" value="P:sucrose biosynthetic process"/>
    <property type="evidence" value="ECO:0007669"/>
    <property type="project" value="TreeGrafter"/>
</dbReference>
<dbReference type="CDD" id="cd00354">
    <property type="entry name" value="FBPase"/>
    <property type="match status" value="1"/>
</dbReference>
<dbReference type="FunFam" id="3.40.190.80:FF:000011">
    <property type="entry name" value="Fructose-1,6-bisphosphatase class 1"/>
    <property type="match status" value="1"/>
</dbReference>
<dbReference type="Gene3D" id="3.40.190.80">
    <property type="match status" value="1"/>
</dbReference>
<dbReference type="Gene3D" id="3.30.540.10">
    <property type="entry name" value="Fructose-1,6-Bisphosphatase, subunit A, domain 1"/>
    <property type="match status" value="1"/>
</dbReference>
<dbReference type="HAMAP" id="MF_01855">
    <property type="entry name" value="FBPase_class1"/>
    <property type="match status" value="1"/>
</dbReference>
<dbReference type="InterPro" id="IPR044015">
    <property type="entry name" value="FBPase_C_dom"/>
</dbReference>
<dbReference type="InterPro" id="IPR000146">
    <property type="entry name" value="FBPase_class-1"/>
</dbReference>
<dbReference type="InterPro" id="IPR033391">
    <property type="entry name" value="FBPase_N"/>
</dbReference>
<dbReference type="InterPro" id="IPR028343">
    <property type="entry name" value="FBPtase"/>
</dbReference>
<dbReference type="InterPro" id="IPR020548">
    <property type="entry name" value="Fructose_bisphosphatase_AS"/>
</dbReference>
<dbReference type="NCBIfam" id="NF006779">
    <property type="entry name" value="PRK09293.1-3"/>
    <property type="match status" value="1"/>
</dbReference>
<dbReference type="NCBIfam" id="NF006780">
    <property type="entry name" value="PRK09293.1-4"/>
    <property type="match status" value="1"/>
</dbReference>
<dbReference type="PANTHER" id="PTHR11556">
    <property type="entry name" value="FRUCTOSE-1,6-BISPHOSPHATASE-RELATED"/>
    <property type="match status" value="1"/>
</dbReference>
<dbReference type="PANTHER" id="PTHR11556:SF35">
    <property type="entry name" value="SEDOHEPTULOSE-1,7-BISPHOSPHATASE, CHLOROPLASTIC"/>
    <property type="match status" value="1"/>
</dbReference>
<dbReference type="Pfam" id="PF00316">
    <property type="entry name" value="FBPase"/>
    <property type="match status" value="1"/>
</dbReference>
<dbReference type="Pfam" id="PF18913">
    <property type="entry name" value="FBPase_C"/>
    <property type="match status" value="1"/>
</dbReference>
<dbReference type="PIRSF" id="PIRSF500210">
    <property type="entry name" value="FBPtase"/>
    <property type="match status" value="1"/>
</dbReference>
<dbReference type="PIRSF" id="PIRSF000904">
    <property type="entry name" value="FBPtase_SBPase"/>
    <property type="match status" value="1"/>
</dbReference>
<dbReference type="PRINTS" id="PR00115">
    <property type="entry name" value="F16BPHPHTASE"/>
</dbReference>
<dbReference type="SUPFAM" id="SSF56655">
    <property type="entry name" value="Carbohydrate phosphatase"/>
    <property type="match status" value="1"/>
</dbReference>
<dbReference type="PROSITE" id="PS00124">
    <property type="entry name" value="FBPASE"/>
    <property type="match status" value="1"/>
</dbReference>
<gene>
    <name evidence="1" type="primary">fbp</name>
    <name type="ordered locus">Mlg_2636</name>
</gene>
<accession>Q0A5B1</accession>
<feature type="chain" id="PRO_0000364459" description="Fructose-1,6-bisphosphatase class 1">
    <location>
        <begin position="1"/>
        <end position="333"/>
    </location>
</feature>
<feature type="binding site" evidence="1">
    <location>
        <position position="92"/>
    </location>
    <ligand>
        <name>Mg(2+)</name>
        <dbReference type="ChEBI" id="CHEBI:18420"/>
        <label>1</label>
    </ligand>
</feature>
<feature type="binding site" evidence="1">
    <location>
        <position position="114"/>
    </location>
    <ligand>
        <name>Mg(2+)</name>
        <dbReference type="ChEBI" id="CHEBI:18420"/>
        <label>1</label>
    </ligand>
</feature>
<feature type="binding site" evidence="1">
    <location>
        <position position="114"/>
    </location>
    <ligand>
        <name>Mg(2+)</name>
        <dbReference type="ChEBI" id="CHEBI:18420"/>
        <label>2</label>
    </ligand>
</feature>
<feature type="binding site" evidence="1">
    <location>
        <position position="116"/>
    </location>
    <ligand>
        <name>Mg(2+)</name>
        <dbReference type="ChEBI" id="CHEBI:18420"/>
        <label>1</label>
    </ligand>
</feature>
<feature type="binding site" evidence="1">
    <location>
        <begin position="117"/>
        <end position="120"/>
    </location>
    <ligand>
        <name>substrate</name>
    </ligand>
</feature>
<feature type="binding site" evidence="1">
    <location>
        <position position="117"/>
    </location>
    <ligand>
        <name>Mg(2+)</name>
        <dbReference type="ChEBI" id="CHEBI:18420"/>
        <label>2</label>
    </ligand>
</feature>
<feature type="binding site" evidence="1">
    <location>
        <position position="209"/>
    </location>
    <ligand>
        <name>substrate</name>
    </ligand>
</feature>
<feature type="binding site" evidence="1">
    <location>
        <position position="279"/>
    </location>
    <ligand>
        <name>Mg(2+)</name>
        <dbReference type="ChEBI" id="CHEBI:18420"/>
        <label>2</label>
    </ligand>
</feature>
<evidence type="ECO:0000255" key="1">
    <source>
        <dbReference type="HAMAP-Rule" id="MF_01855"/>
    </source>
</evidence>
<proteinExistence type="inferred from homology"/>
<reference key="1">
    <citation type="submission" date="2006-08" db="EMBL/GenBank/DDBJ databases">
        <title>Complete sequence of Alkalilimnicola ehrilichei MLHE-1.</title>
        <authorList>
            <person name="Copeland A."/>
            <person name="Lucas S."/>
            <person name="Lapidus A."/>
            <person name="Barry K."/>
            <person name="Detter J.C."/>
            <person name="Glavina del Rio T."/>
            <person name="Hammon N."/>
            <person name="Israni S."/>
            <person name="Dalin E."/>
            <person name="Tice H."/>
            <person name="Pitluck S."/>
            <person name="Sims D."/>
            <person name="Brettin T."/>
            <person name="Bruce D."/>
            <person name="Han C."/>
            <person name="Tapia R."/>
            <person name="Gilna P."/>
            <person name="Schmutz J."/>
            <person name="Larimer F."/>
            <person name="Land M."/>
            <person name="Hauser L."/>
            <person name="Kyrpides N."/>
            <person name="Mikhailova N."/>
            <person name="Oremland R.S."/>
            <person name="Hoeft S.E."/>
            <person name="Switzer-Blum J."/>
            <person name="Kulp T."/>
            <person name="King G."/>
            <person name="Tabita R."/>
            <person name="Witte B."/>
            <person name="Santini J.M."/>
            <person name="Basu P."/>
            <person name="Hollibaugh J.T."/>
            <person name="Xie G."/>
            <person name="Stolz J.F."/>
            <person name="Richardson P."/>
        </authorList>
    </citation>
    <scope>NUCLEOTIDE SEQUENCE [LARGE SCALE GENOMIC DNA]</scope>
    <source>
        <strain>ATCC BAA-1101 / DSM 17681 / MLHE-1</strain>
    </source>
</reference>
<name>F16PA_ALKEH</name>
<comment type="catalytic activity">
    <reaction evidence="1">
        <text>beta-D-fructose 1,6-bisphosphate + H2O = beta-D-fructose 6-phosphate + phosphate</text>
        <dbReference type="Rhea" id="RHEA:11064"/>
        <dbReference type="ChEBI" id="CHEBI:15377"/>
        <dbReference type="ChEBI" id="CHEBI:32966"/>
        <dbReference type="ChEBI" id="CHEBI:43474"/>
        <dbReference type="ChEBI" id="CHEBI:57634"/>
        <dbReference type="EC" id="3.1.3.11"/>
    </reaction>
</comment>
<comment type="cofactor">
    <cofactor evidence="1">
        <name>Mg(2+)</name>
        <dbReference type="ChEBI" id="CHEBI:18420"/>
    </cofactor>
    <text evidence="1">Binds 2 magnesium ions per subunit.</text>
</comment>
<comment type="pathway">
    <text evidence="1">Carbohydrate biosynthesis; gluconeogenesis.</text>
</comment>
<comment type="subunit">
    <text evidence="1">Homotetramer.</text>
</comment>
<comment type="subcellular location">
    <subcellularLocation>
        <location evidence="1">Cytoplasm</location>
    </subcellularLocation>
</comment>
<comment type="similarity">
    <text evidence="1">Belongs to the FBPase class 1 family.</text>
</comment>
<protein>
    <recommendedName>
        <fullName evidence="1">Fructose-1,6-bisphosphatase class 1</fullName>
        <shortName evidence="1">FBPase class 1</shortName>
        <ecNumber evidence="1">3.1.3.11</ecNumber>
    </recommendedName>
    <alternativeName>
        <fullName evidence="1">D-fructose-1,6-bisphosphate 1-phosphohydrolase class 1</fullName>
    </alternativeName>
</protein>
<keyword id="KW-0119">Carbohydrate metabolism</keyword>
<keyword id="KW-0963">Cytoplasm</keyword>
<keyword id="KW-0378">Hydrolase</keyword>
<keyword id="KW-0460">Magnesium</keyword>
<keyword id="KW-0479">Metal-binding</keyword>
<keyword id="KW-1185">Reference proteome</keyword>
<sequence length="333" mass="36878">MDQSRMTLGRFLAQQCPQDEKGKALALLLRQVGDSCRRIADAVAGGALREMTGAADNVNVQGEEQKKLDVFANDVLIEGCNWGGTVAGMASEEEDDIYTLPEGEPRGPWLLLFDPLDGSSNIDVNVSVGTIFSVLPAPDTGRDPVNEDLLQPGHRQVAAGYAVYGPSTVLVLTLGDGVYAFTLDRGQGEWFLTSSKMKVPEQTAEFAINCSYQRIWPAPIKRYIEECLDGEEGPRGKRFNMRWIASMVADLHRIFTRGGVFLYPADEKRPNGRLRVLYEINPMSMLMEQAGGEAFTGKERALDLQPEALHQRSGLMLGSREEVEVLRRYYAEQ</sequence>
<organism>
    <name type="scientific">Alkalilimnicola ehrlichii (strain ATCC BAA-1101 / DSM 17681 / MLHE-1)</name>
    <dbReference type="NCBI Taxonomy" id="187272"/>
    <lineage>
        <taxon>Bacteria</taxon>
        <taxon>Pseudomonadati</taxon>
        <taxon>Pseudomonadota</taxon>
        <taxon>Gammaproteobacteria</taxon>
        <taxon>Chromatiales</taxon>
        <taxon>Ectothiorhodospiraceae</taxon>
        <taxon>Alkalilimnicola</taxon>
    </lineage>
</organism>